<keyword id="KW-0028">Amino-acid biosynthesis</keyword>
<keyword id="KW-0963">Cytoplasm</keyword>
<keyword id="KW-0368">Histidine biosynthesis</keyword>
<keyword id="KW-0413">Isomerase</keyword>
<dbReference type="EC" id="5.3.1.16" evidence="1"/>
<dbReference type="EMBL" id="CP000090">
    <property type="protein sequence ID" value="AAZ62466.1"/>
    <property type="molecule type" value="Genomic_DNA"/>
</dbReference>
<dbReference type="SMR" id="Q46WL7"/>
<dbReference type="STRING" id="264198.Reut_A3106"/>
<dbReference type="KEGG" id="reu:Reut_A3106"/>
<dbReference type="eggNOG" id="COG0106">
    <property type="taxonomic scope" value="Bacteria"/>
</dbReference>
<dbReference type="HOGENOM" id="CLU_048577_1_1_4"/>
<dbReference type="OrthoDB" id="9807749at2"/>
<dbReference type="UniPathway" id="UPA00031">
    <property type="reaction ID" value="UER00009"/>
</dbReference>
<dbReference type="GO" id="GO:0005737">
    <property type="term" value="C:cytoplasm"/>
    <property type="evidence" value="ECO:0007669"/>
    <property type="project" value="UniProtKB-SubCell"/>
</dbReference>
<dbReference type="GO" id="GO:0003949">
    <property type="term" value="F:1-(5-phosphoribosyl)-5-[(5-phosphoribosylamino)methylideneamino]imidazole-4-carboxamide isomerase activity"/>
    <property type="evidence" value="ECO:0007669"/>
    <property type="project" value="UniProtKB-UniRule"/>
</dbReference>
<dbReference type="GO" id="GO:0000105">
    <property type="term" value="P:L-histidine biosynthetic process"/>
    <property type="evidence" value="ECO:0007669"/>
    <property type="project" value="UniProtKB-UniRule"/>
</dbReference>
<dbReference type="GO" id="GO:0000162">
    <property type="term" value="P:L-tryptophan biosynthetic process"/>
    <property type="evidence" value="ECO:0007669"/>
    <property type="project" value="TreeGrafter"/>
</dbReference>
<dbReference type="CDD" id="cd04732">
    <property type="entry name" value="HisA"/>
    <property type="match status" value="1"/>
</dbReference>
<dbReference type="FunFam" id="3.20.20.70:FF:000009">
    <property type="entry name" value="1-(5-phosphoribosyl)-5-[(5-phosphoribosylamino)methylideneamino] imidazole-4-carboxamide isomerase"/>
    <property type="match status" value="1"/>
</dbReference>
<dbReference type="Gene3D" id="3.20.20.70">
    <property type="entry name" value="Aldolase class I"/>
    <property type="match status" value="1"/>
</dbReference>
<dbReference type="HAMAP" id="MF_01014">
    <property type="entry name" value="HisA"/>
    <property type="match status" value="1"/>
</dbReference>
<dbReference type="InterPro" id="IPR013785">
    <property type="entry name" value="Aldolase_TIM"/>
</dbReference>
<dbReference type="InterPro" id="IPR006062">
    <property type="entry name" value="His_biosynth"/>
</dbReference>
<dbReference type="InterPro" id="IPR006063">
    <property type="entry name" value="HisA_bact_arch"/>
</dbReference>
<dbReference type="InterPro" id="IPR044524">
    <property type="entry name" value="Isoase_HisA-like"/>
</dbReference>
<dbReference type="InterPro" id="IPR023016">
    <property type="entry name" value="Isoase_HisA-like_bact"/>
</dbReference>
<dbReference type="InterPro" id="IPR011060">
    <property type="entry name" value="RibuloseP-bd_barrel"/>
</dbReference>
<dbReference type="NCBIfam" id="TIGR00007">
    <property type="entry name" value="1-(5-phosphoribosyl)-5-[(5-phosphoribosylamino)methylideneamino]imidazole-4-carboxamide isomerase"/>
    <property type="match status" value="1"/>
</dbReference>
<dbReference type="NCBIfam" id="NF010112">
    <property type="entry name" value="PRK13585.1"/>
    <property type="match status" value="1"/>
</dbReference>
<dbReference type="PANTHER" id="PTHR43090">
    <property type="entry name" value="1-(5-PHOSPHORIBOSYL)-5-[(5-PHOSPHORIBOSYLAMINO)METHYLIDENEAMINO] IMIDAZOLE-4-CARBOXAMIDE ISOMERASE"/>
    <property type="match status" value="1"/>
</dbReference>
<dbReference type="PANTHER" id="PTHR43090:SF2">
    <property type="entry name" value="1-(5-PHOSPHORIBOSYL)-5-[(5-PHOSPHORIBOSYLAMINO)METHYLIDENEAMINO] IMIDAZOLE-4-CARBOXAMIDE ISOMERASE"/>
    <property type="match status" value="1"/>
</dbReference>
<dbReference type="Pfam" id="PF00977">
    <property type="entry name" value="His_biosynth"/>
    <property type="match status" value="1"/>
</dbReference>
<dbReference type="SUPFAM" id="SSF51366">
    <property type="entry name" value="Ribulose-phoshate binding barrel"/>
    <property type="match status" value="1"/>
</dbReference>
<proteinExistence type="inferred from homology"/>
<organism>
    <name type="scientific">Cupriavidus pinatubonensis (strain JMP 134 / LMG 1197)</name>
    <name type="common">Cupriavidus necator (strain JMP 134)</name>
    <dbReference type="NCBI Taxonomy" id="264198"/>
    <lineage>
        <taxon>Bacteria</taxon>
        <taxon>Pseudomonadati</taxon>
        <taxon>Pseudomonadota</taxon>
        <taxon>Betaproteobacteria</taxon>
        <taxon>Burkholderiales</taxon>
        <taxon>Burkholderiaceae</taxon>
        <taxon>Cupriavidus</taxon>
    </lineage>
</organism>
<name>HIS4_CUPPJ</name>
<accession>Q46WL7</accession>
<sequence length="248" mass="26335">MLLIPAIDLKDGQCVRLKQGDMDQATVFSEDPAAMARHWVNQGARRLHLVDLNGAFVGKPRNEAAIKAIIAEVGDEIPVQLGGGIRDLNTIERWLDDGLSYVIIGTAAVKNPGFLKDACSAFGGHIIVGLDAKDGKVATDGWSKLTGHEVADLARKYEDYGVEAIIYTDIGRDGMLQGINIDATVKLAQSMSIPVIASGGLSNLADIDNLCAVENEGVEGVICGRAIYSGDLNFTDAQARADKLSNGE</sequence>
<feature type="chain" id="PRO_0000229077" description="1-(5-phosphoribosyl)-5-[(5-phosphoribosylamino)methylideneamino] imidazole-4-carboxamide isomerase">
    <location>
        <begin position="1"/>
        <end position="248"/>
    </location>
</feature>
<feature type="active site" description="Proton acceptor" evidence="1">
    <location>
        <position position="8"/>
    </location>
</feature>
<feature type="active site" description="Proton donor" evidence="1">
    <location>
        <position position="131"/>
    </location>
</feature>
<reference key="1">
    <citation type="journal article" date="2010" name="PLoS ONE">
        <title>The complete multipartite genome sequence of Cupriavidus necator JMP134, a versatile pollutant degrader.</title>
        <authorList>
            <person name="Lykidis A."/>
            <person name="Perez-Pantoja D."/>
            <person name="Ledger T."/>
            <person name="Mavromatis K."/>
            <person name="Anderson I.J."/>
            <person name="Ivanova N.N."/>
            <person name="Hooper S.D."/>
            <person name="Lapidus A."/>
            <person name="Lucas S."/>
            <person name="Gonzalez B."/>
            <person name="Kyrpides N.C."/>
        </authorList>
    </citation>
    <scope>NUCLEOTIDE SEQUENCE [LARGE SCALE GENOMIC DNA]</scope>
    <source>
        <strain>JMP134 / LMG 1197</strain>
    </source>
</reference>
<evidence type="ECO:0000255" key="1">
    <source>
        <dbReference type="HAMAP-Rule" id="MF_01014"/>
    </source>
</evidence>
<gene>
    <name evidence="1" type="primary">hisA</name>
    <name type="ordered locus">Reut_A3106</name>
</gene>
<protein>
    <recommendedName>
        <fullName evidence="1">1-(5-phosphoribosyl)-5-[(5-phosphoribosylamino)methylideneamino] imidazole-4-carboxamide isomerase</fullName>
        <ecNumber evidence="1">5.3.1.16</ecNumber>
    </recommendedName>
    <alternativeName>
        <fullName evidence="1">Phosphoribosylformimino-5-aminoimidazole carboxamide ribotide isomerase</fullName>
    </alternativeName>
</protein>
<comment type="catalytic activity">
    <reaction evidence="1">
        <text>1-(5-phospho-beta-D-ribosyl)-5-[(5-phospho-beta-D-ribosylamino)methylideneamino]imidazole-4-carboxamide = 5-[(5-phospho-1-deoxy-D-ribulos-1-ylimino)methylamino]-1-(5-phospho-beta-D-ribosyl)imidazole-4-carboxamide</text>
        <dbReference type="Rhea" id="RHEA:15469"/>
        <dbReference type="ChEBI" id="CHEBI:58435"/>
        <dbReference type="ChEBI" id="CHEBI:58525"/>
        <dbReference type="EC" id="5.3.1.16"/>
    </reaction>
</comment>
<comment type="pathway">
    <text evidence="1">Amino-acid biosynthesis; L-histidine biosynthesis; L-histidine from 5-phospho-alpha-D-ribose 1-diphosphate: step 4/9.</text>
</comment>
<comment type="subcellular location">
    <subcellularLocation>
        <location evidence="1">Cytoplasm</location>
    </subcellularLocation>
</comment>
<comment type="similarity">
    <text evidence="1">Belongs to the HisA/HisF family.</text>
</comment>